<feature type="chain" id="PRO_1000097343" description="Peptide deformylase">
    <location>
        <begin position="1"/>
        <end position="169"/>
    </location>
</feature>
<feature type="active site" evidence="1">
    <location>
        <position position="134"/>
    </location>
</feature>
<feature type="binding site" evidence="1">
    <location>
        <position position="91"/>
    </location>
    <ligand>
        <name>Fe cation</name>
        <dbReference type="ChEBI" id="CHEBI:24875"/>
    </ligand>
</feature>
<feature type="binding site" evidence="1">
    <location>
        <position position="133"/>
    </location>
    <ligand>
        <name>Fe cation</name>
        <dbReference type="ChEBI" id="CHEBI:24875"/>
    </ligand>
</feature>
<feature type="binding site" evidence="1">
    <location>
        <position position="137"/>
    </location>
    <ligand>
        <name>Fe cation</name>
        <dbReference type="ChEBI" id="CHEBI:24875"/>
    </ligand>
</feature>
<reference key="1">
    <citation type="journal article" date="2011" name="J. Bacteriol.">
        <title>Comparative genomics of 28 Salmonella enterica isolates: evidence for CRISPR-mediated adaptive sublineage evolution.</title>
        <authorList>
            <person name="Fricke W.F."/>
            <person name="Mammel M.K."/>
            <person name="McDermott P.F."/>
            <person name="Tartera C."/>
            <person name="White D.G."/>
            <person name="Leclerc J.E."/>
            <person name="Ravel J."/>
            <person name="Cebula T.A."/>
        </authorList>
    </citation>
    <scope>NUCLEOTIDE SEQUENCE [LARGE SCALE GENOMIC DNA]</scope>
    <source>
        <strain>CVM19633</strain>
    </source>
</reference>
<keyword id="KW-0378">Hydrolase</keyword>
<keyword id="KW-0408">Iron</keyword>
<keyword id="KW-0479">Metal-binding</keyword>
<keyword id="KW-0648">Protein biosynthesis</keyword>
<name>DEF_SALSV</name>
<comment type="function">
    <text evidence="1">Removes the formyl group from the N-terminal Met of newly synthesized proteins. Requires at least a dipeptide for an efficient rate of reaction. N-terminal L-methionine is a prerequisite for activity but the enzyme has broad specificity at other positions.</text>
</comment>
<comment type="catalytic activity">
    <reaction evidence="1">
        <text>N-terminal N-formyl-L-methionyl-[peptide] + H2O = N-terminal L-methionyl-[peptide] + formate</text>
        <dbReference type="Rhea" id="RHEA:24420"/>
        <dbReference type="Rhea" id="RHEA-COMP:10639"/>
        <dbReference type="Rhea" id="RHEA-COMP:10640"/>
        <dbReference type="ChEBI" id="CHEBI:15377"/>
        <dbReference type="ChEBI" id="CHEBI:15740"/>
        <dbReference type="ChEBI" id="CHEBI:49298"/>
        <dbReference type="ChEBI" id="CHEBI:64731"/>
        <dbReference type="EC" id="3.5.1.88"/>
    </reaction>
</comment>
<comment type="cofactor">
    <cofactor evidence="1">
        <name>Fe(2+)</name>
        <dbReference type="ChEBI" id="CHEBI:29033"/>
    </cofactor>
    <text evidence="1">Binds 1 Fe(2+) ion.</text>
</comment>
<comment type="similarity">
    <text evidence="1">Belongs to the polypeptide deformylase family.</text>
</comment>
<protein>
    <recommendedName>
        <fullName evidence="1">Peptide deformylase</fullName>
        <shortName evidence="1">PDF</shortName>
        <ecNumber evidence="1">3.5.1.88</ecNumber>
    </recommendedName>
    <alternativeName>
        <fullName evidence="1">Polypeptide deformylase</fullName>
    </alternativeName>
</protein>
<evidence type="ECO:0000255" key="1">
    <source>
        <dbReference type="HAMAP-Rule" id="MF_00163"/>
    </source>
</evidence>
<accession>B4TXB0</accession>
<gene>
    <name evidence="1" type="primary">def</name>
    <name type="ordered locus">SeSA_A3603</name>
</gene>
<proteinExistence type="inferred from homology"/>
<sequence length="169" mass="19282">MSVLQVLHIPDERLRKVAKPVEEVNAEIQRIVDDMFETMYAEEGIGLAATQVDIHQRIIVIDVSENRDERLVLINPELLEKSGETGIEEGCLSIPEQRALVPRAEKVKIRALDRDGNPFELEADGLLAICIQHEMDHLVGKLFIDYLSPLKQQRIRQKVEKLDRLNARA</sequence>
<dbReference type="EC" id="3.5.1.88" evidence="1"/>
<dbReference type="EMBL" id="CP001127">
    <property type="protein sequence ID" value="ACF89177.1"/>
    <property type="molecule type" value="Genomic_DNA"/>
</dbReference>
<dbReference type="RefSeq" id="WP_000114987.1">
    <property type="nucleotide sequence ID" value="NC_011094.1"/>
</dbReference>
<dbReference type="SMR" id="B4TXB0"/>
<dbReference type="KEGG" id="sew:SeSA_A3603"/>
<dbReference type="HOGENOM" id="CLU_061901_2_1_6"/>
<dbReference type="Proteomes" id="UP000001865">
    <property type="component" value="Chromosome"/>
</dbReference>
<dbReference type="GO" id="GO:0046872">
    <property type="term" value="F:metal ion binding"/>
    <property type="evidence" value="ECO:0007669"/>
    <property type="project" value="UniProtKB-KW"/>
</dbReference>
<dbReference type="GO" id="GO:0042586">
    <property type="term" value="F:peptide deformylase activity"/>
    <property type="evidence" value="ECO:0007669"/>
    <property type="project" value="UniProtKB-UniRule"/>
</dbReference>
<dbReference type="GO" id="GO:0043686">
    <property type="term" value="P:co-translational protein modification"/>
    <property type="evidence" value="ECO:0007669"/>
    <property type="project" value="TreeGrafter"/>
</dbReference>
<dbReference type="GO" id="GO:0006412">
    <property type="term" value="P:translation"/>
    <property type="evidence" value="ECO:0007669"/>
    <property type="project" value="UniProtKB-UniRule"/>
</dbReference>
<dbReference type="CDD" id="cd00487">
    <property type="entry name" value="Pep_deformylase"/>
    <property type="match status" value="1"/>
</dbReference>
<dbReference type="FunFam" id="3.90.45.10:FF:000001">
    <property type="entry name" value="Peptide deformylase"/>
    <property type="match status" value="1"/>
</dbReference>
<dbReference type="Gene3D" id="3.90.45.10">
    <property type="entry name" value="Peptide deformylase"/>
    <property type="match status" value="1"/>
</dbReference>
<dbReference type="HAMAP" id="MF_00163">
    <property type="entry name" value="Pep_deformylase"/>
    <property type="match status" value="1"/>
</dbReference>
<dbReference type="InterPro" id="IPR023635">
    <property type="entry name" value="Peptide_deformylase"/>
</dbReference>
<dbReference type="InterPro" id="IPR036821">
    <property type="entry name" value="Peptide_deformylase_sf"/>
</dbReference>
<dbReference type="NCBIfam" id="TIGR00079">
    <property type="entry name" value="pept_deformyl"/>
    <property type="match status" value="1"/>
</dbReference>
<dbReference type="NCBIfam" id="NF001159">
    <property type="entry name" value="PRK00150.1-3"/>
    <property type="match status" value="1"/>
</dbReference>
<dbReference type="PANTHER" id="PTHR10458">
    <property type="entry name" value="PEPTIDE DEFORMYLASE"/>
    <property type="match status" value="1"/>
</dbReference>
<dbReference type="PANTHER" id="PTHR10458:SF21">
    <property type="entry name" value="PEPTIDE DEFORMYLASE"/>
    <property type="match status" value="1"/>
</dbReference>
<dbReference type="Pfam" id="PF01327">
    <property type="entry name" value="Pep_deformylase"/>
    <property type="match status" value="1"/>
</dbReference>
<dbReference type="PIRSF" id="PIRSF004749">
    <property type="entry name" value="Pep_def"/>
    <property type="match status" value="1"/>
</dbReference>
<dbReference type="PRINTS" id="PR01576">
    <property type="entry name" value="PDEFORMYLASE"/>
</dbReference>
<dbReference type="SUPFAM" id="SSF56420">
    <property type="entry name" value="Peptide deformylase"/>
    <property type="match status" value="1"/>
</dbReference>
<organism>
    <name type="scientific">Salmonella schwarzengrund (strain CVM19633)</name>
    <dbReference type="NCBI Taxonomy" id="439843"/>
    <lineage>
        <taxon>Bacteria</taxon>
        <taxon>Pseudomonadati</taxon>
        <taxon>Pseudomonadota</taxon>
        <taxon>Gammaproteobacteria</taxon>
        <taxon>Enterobacterales</taxon>
        <taxon>Enterobacteriaceae</taxon>
        <taxon>Salmonella</taxon>
    </lineage>
</organism>